<dbReference type="EC" id="2.8.1.6" evidence="1"/>
<dbReference type="EMBL" id="AE015927">
    <property type="protein sequence ID" value="AAO34803.1"/>
    <property type="molecule type" value="Genomic_DNA"/>
</dbReference>
<dbReference type="RefSeq" id="WP_011098475.1">
    <property type="nucleotide sequence ID" value="NC_004557.1"/>
</dbReference>
<dbReference type="SMR" id="Q899M1"/>
<dbReference type="STRING" id="212717.CTC_00151"/>
<dbReference type="GeneID" id="24253745"/>
<dbReference type="KEGG" id="ctc:CTC_00151"/>
<dbReference type="HOGENOM" id="CLU_033172_2_1_9"/>
<dbReference type="OrthoDB" id="9786826at2"/>
<dbReference type="UniPathway" id="UPA00078">
    <property type="reaction ID" value="UER00162"/>
</dbReference>
<dbReference type="Proteomes" id="UP000001412">
    <property type="component" value="Chromosome"/>
</dbReference>
<dbReference type="GO" id="GO:0051537">
    <property type="term" value="F:2 iron, 2 sulfur cluster binding"/>
    <property type="evidence" value="ECO:0007669"/>
    <property type="project" value="UniProtKB-KW"/>
</dbReference>
<dbReference type="GO" id="GO:0051539">
    <property type="term" value="F:4 iron, 4 sulfur cluster binding"/>
    <property type="evidence" value="ECO:0007669"/>
    <property type="project" value="UniProtKB-KW"/>
</dbReference>
<dbReference type="GO" id="GO:0004076">
    <property type="term" value="F:biotin synthase activity"/>
    <property type="evidence" value="ECO:0007669"/>
    <property type="project" value="UniProtKB-UniRule"/>
</dbReference>
<dbReference type="GO" id="GO:0005506">
    <property type="term" value="F:iron ion binding"/>
    <property type="evidence" value="ECO:0007669"/>
    <property type="project" value="UniProtKB-UniRule"/>
</dbReference>
<dbReference type="GO" id="GO:0009102">
    <property type="term" value="P:biotin biosynthetic process"/>
    <property type="evidence" value="ECO:0007669"/>
    <property type="project" value="UniProtKB-UniRule"/>
</dbReference>
<dbReference type="CDD" id="cd01335">
    <property type="entry name" value="Radical_SAM"/>
    <property type="match status" value="1"/>
</dbReference>
<dbReference type="FunFam" id="3.20.20.70:FF:000026">
    <property type="entry name" value="Biotin synthase"/>
    <property type="match status" value="1"/>
</dbReference>
<dbReference type="Gene3D" id="3.20.20.70">
    <property type="entry name" value="Aldolase class I"/>
    <property type="match status" value="1"/>
</dbReference>
<dbReference type="HAMAP" id="MF_01694">
    <property type="entry name" value="BioB"/>
    <property type="match status" value="1"/>
</dbReference>
<dbReference type="InterPro" id="IPR013785">
    <property type="entry name" value="Aldolase_TIM"/>
</dbReference>
<dbReference type="InterPro" id="IPR010722">
    <property type="entry name" value="BATS_dom"/>
</dbReference>
<dbReference type="InterPro" id="IPR002684">
    <property type="entry name" value="Biotin_synth/BioAB"/>
</dbReference>
<dbReference type="InterPro" id="IPR024177">
    <property type="entry name" value="Biotin_synthase"/>
</dbReference>
<dbReference type="InterPro" id="IPR006638">
    <property type="entry name" value="Elp3/MiaA/NifB-like_rSAM"/>
</dbReference>
<dbReference type="InterPro" id="IPR007197">
    <property type="entry name" value="rSAM"/>
</dbReference>
<dbReference type="NCBIfam" id="TIGR00433">
    <property type="entry name" value="bioB"/>
    <property type="match status" value="1"/>
</dbReference>
<dbReference type="PANTHER" id="PTHR22976">
    <property type="entry name" value="BIOTIN SYNTHASE"/>
    <property type="match status" value="1"/>
</dbReference>
<dbReference type="PANTHER" id="PTHR22976:SF2">
    <property type="entry name" value="BIOTIN SYNTHASE, MITOCHONDRIAL"/>
    <property type="match status" value="1"/>
</dbReference>
<dbReference type="Pfam" id="PF06968">
    <property type="entry name" value="BATS"/>
    <property type="match status" value="1"/>
</dbReference>
<dbReference type="Pfam" id="PF04055">
    <property type="entry name" value="Radical_SAM"/>
    <property type="match status" value="1"/>
</dbReference>
<dbReference type="PIRSF" id="PIRSF001619">
    <property type="entry name" value="Biotin_synth"/>
    <property type="match status" value="1"/>
</dbReference>
<dbReference type="SFLD" id="SFLDG01278">
    <property type="entry name" value="biotin_synthase_like"/>
    <property type="match status" value="1"/>
</dbReference>
<dbReference type="SFLD" id="SFLDS00029">
    <property type="entry name" value="Radical_SAM"/>
    <property type="match status" value="1"/>
</dbReference>
<dbReference type="SMART" id="SM00876">
    <property type="entry name" value="BATS"/>
    <property type="match status" value="1"/>
</dbReference>
<dbReference type="SMART" id="SM00729">
    <property type="entry name" value="Elp3"/>
    <property type="match status" value="1"/>
</dbReference>
<dbReference type="SUPFAM" id="SSF102114">
    <property type="entry name" value="Radical SAM enzymes"/>
    <property type="match status" value="1"/>
</dbReference>
<dbReference type="PROSITE" id="PS51918">
    <property type="entry name" value="RADICAL_SAM"/>
    <property type="match status" value="1"/>
</dbReference>
<comment type="function">
    <text evidence="1">Catalyzes the conversion of dethiobiotin (DTB) to biotin by the insertion of a sulfur atom into dethiobiotin via a radical-based mechanism.</text>
</comment>
<comment type="catalytic activity">
    <reaction evidence="1">
        <text>(4R,5S)-dethiobiotin + (sulfur carrier)-SH + 2 reduced [2Fe-2S]-[ferredoxin] + 2 S-adenosyl-L-methionine = (sulfur carrier)-H + biotin + 2 5'-deoxyadenosine + 2 L-methionine + 2 oxidized [2Fe-2S]-[ferredoxin]</text>
        <dbReference type="Rhea" id="RHEA:22060"/>
        <dbReference type="Rhea" id="RHEA-COMP:10000"/>
        <dbReference type="Rhea" id="RHEA-COMP:10001"/>
        <dbReference type="Rhea" id="RHEA-COMP:14737"/>
        <dbReference type="Rhea" id="RHEA-COMP:14739"/>
        <dbReference type="ChEBI" id="CHEBI:17319"/>
        <dbReference type="ChEBI" id="CHEBI:29917"/>
        <dbReference type="ChEBI" id="CHEBI:33737"/>
        <dbReference type="ChEBI" id="CHEBI:33738"/>
        <dbReference type="ChEBI" id="CHEBI:57586"/>
        <dbReference type="ChEBI" id="CHEBI:57844"/>
        <dbReference type="ChEBI" id="CHEBI:59789"/>
        <dbReference type="ChEBI" id="CHEBI:64428"/>
        <dbReference type="ChEBI" id="CHEBI:149473"/>
        <dbReference type="EC" id="2.8.1.6"/>
    </reaction>
</comment>
<comment type="cofactor">
    <cofactor evidence="1">
        <name>[4Fe-4S] cluster</name>
        <dbReference type="ChEBI" id="CHEBI:49883"/>
    </cofactor>
    <text evidence="1">Binds 1 [4Fe-4S] cluster. The cluster is coordinated with 3 cysteines and an exchangeable S-adenosyl-L-methionine.</text>
</comment>
<comment type="cofactor">
    <cofactor evidence="1">
        <name>[2Fe-2S] cluster</name>
        <dbReference type="ChEBI" id="CHEBI:190135"/>
    </cofactor>
    <text evidence="1">Binds 1 [2Fe-2S] cluster. The cluster is coordinated with 3 cysteines and 1 arginine.</text>
</comment>
<comment type="pathway">
    <text evidence="1">Cofactor biosynthesis; biotin biosynthesis; biotin from 7,8-diaminononanoate: step 2/2.</text>
</comment>
<comment type="subunit">
    <text evidence="1">Homodimer.</text>
</comment>
<comment type="similarity">
    <text evidence="1">Belongs to the radical SAM superfamily. Biotin synthase family.</text>
</comment>
<protein>
    <recommendedName>
        <fullName evidence="1">Biotin synthase</fullName>
        <ecNumber evidence="1">2.8.1.6</ecNumber>
    </recommendedName>
</protein>
<feature type="chain" id="PRO_0000381322" description="Biotin synthase">
    <location>
        <begin position="1"/>
        <end position="325"/>
    </location>
</feature>
<feature type="domain" description="Radical SAM core" evidence="2">
    <location>
        <begin position="49"/>
        <end position="278"/>
    </location>
</feature>
<feature type="binding site" evidence="1">
    <location>
        <position position="67"/>
    </location>
    <ligand>
        <name>[4Fe-4S] cluster</name>
        <dbReference type="ChEBI" id="CHEBI:49883"/>
        <note>4Fe-4S-S-AdoMet</note>
    </ligand>
</feature>
<feature type="binding site" evidence="1">
    <location>
        <position position="71"/>
    </location>
    <ligand>
        <name>[4Fe-4S] cluster</name>
        <dbReference type="ChEBI" id="CHEBI:49883"/>
        <note>4Fe-4S-S-AdoMet</note>
    </ligand>
</feature>
<feature type="binding site" evidence="1">
    <location>
        <position position="74"/>
    </location>
    <ligand>
        <name>[4Fe-4S] cluster</name>
        <dbReference type="ChEBI" id="CHEBI:49883"/>
        <note>4Fe-4S-S-AdoMet</note>
    </ligand>
</feature>
<feature type="binding site" evidence="1">
    <location>
        <position position="111"/>
    </location>
    <ligand>
        <name>[2Fe-2S] cluster</name>
        <dbReference type="ChEBI" id="CHEBI:190135"/>
    </ligand>
</feature>
<feature type="binding site" evidence="1">
    <location>
        <position position="143"/>
    </location>
    <ligand>
        <name>[2Fe-2S] cluster</name>
        <dbReference type="ChEBI" id="CHEBI:190135"/>
    </ligand>
</feature>
<feature type="binding site" evidence="1">
    <location>
        <position position="203"/>
    </location>
    <ligand>
        <name>[2Fe-2S] cluster</name>
        <dbReference type="ChEBI" id="CHEBI:190135"/>
    </ligand>
</feature>
<feature type="binding site" evidence="1">
    <location>
        <position position="273"/>
    </location>
    <ligand>
        <name>[2Fe-2S] cluster</name>
        <dbReference type="ChEBI" id="CHEBI:190135"/>
    </ligand>
</feature>
<reference key="1">
    <citation type="journal article" date="2003" name="Proc. Natl. Acad. Sci. U.S.A.">
        <title>The genome sequence of Clostridium tetani, the causative agent of tetanus disease.</title>
        <authorList>
            <person name="Brueggemann H."/>
            <person name="Baeumer S."/>
            <person name="Fricke W.F."/>
            <person name="Wiezer A."/>
            <person name="Liesegang H."/>
            <person name="Decker I."/>
            <person name="Herzberg C."/>
            <person name="Martinez-Arias R."/>
            <person name="Merkl R."/>
            <person name="Henne A."/>
            <person name="Gottschalk G."/>
        </authorList>
    </citation>
    <scope>NUCLEOTIDE SEQUENCE [LARGE SCALE GENOMIC DNA]</scope>
    <source>
        <strain>Massachusetts / E88</strain>
    </source>
</reference>
<sequence>MKNIILEIEEKIYSDEDITFNEAITLFQSSYDKNLNNLLDAANRIRNKFNGNIVDLCSIMNAKSGRCSEDCKFCAQSEHYNTNIKKYNMINMSDALNLAKENKEHGINRFSLVTSGKALTSNDFEKALEIYKEINKRVNINLCASLGILSYNQLLQLKNVGVTMYHHNLETSREYYNKICTTHSYDERIETINNAKKAGLMVCSGGIIGMGETITDRIKLAFELKSLQIQSIPINILNPVKGTPLEYTKRLEQNDILKTIAIFRFINPKASIRLAGGRNLIDNFGKGCFRAGANATISGNYLTTSGNKINDDIEMIKSLGLSLDI</sequence>
<gene>
    <name evidence="1" type="primary">bioB</name>
    <name type="ordered locus">CTC_00151</name>
</gene>
<accession>Q899M1</accession>
<name>BIOB_CLOTE</name>
<evidence type="ECO:0000255" key="1">
    <source>
        <dbReference type="HAMAP-Rule" id="MF_01694"/>
    </source>
</evidence>
<evidence type="ECO:0000255" key="2">
    <source>
        <dbReference type="PROSITE-ProRule" id="PRU01266"/>
    </source>
</evidence>
<organism>
    <name type="scientific">Clostridium tetani (strain Massachusetts / E88)</name>
    <dbReference type="NCBI Taxonomy" id="212717"/>
    <lineage>
        <taxon>Bacteria</taxon>
        <taxon>Bacillati</taxon>
        <taxon>Bacillota</taxon>
        <taxon>Clostridia</taxon>
        <taxon>Eubacteriales</taxon>
        <taxon>Clostridiaceae</taxon>
        <taxon>Clostridium</taxon>
    </lineage>
</organism>
<keyword id="KW-0001">2Fe-2S</keyword>
<keyword id="KW-0004">4Fe-4S</keyword>
<keyword id="KW-0093">Biotin biosynthesis</keyword>
<keyword id="KW-0408">Iron</keyword>
<keyword id="KW-0411">Iron-sulfur</keyword>
<keyword id="KW-0479">Metal-binding</keyword>
<keyword id="KW-1185">Reference proteome</keyword>
<keyword id="KW-0949">S-adenosyl-L-methionine</keyword>
<keyword id="KW-0808">Transferase</keyword>
<proteinExistence type="inferred from homology"/>